<keyword id="KW-0025">Alternative splicing</keyword>
<keyword id="KW-1015">Disulfide bond</keyword>
<keyword id="KW-0325">Glycoprotein</keyword>
<keyword id="KW-0358">Heparin-binding</keyword>
<keyword id="KW-1185">Reference proteome</keyword>
<keyword id="KW-0964">Secreted</keyword>
<keyword id="KW-0716">Sensory transduction</keyword>
<keyword id="KW-0732">Signal</keyword>
<keyword id="KW-0879">Wnt signaling pathway</keyword>
<comment type="function">
    <text evidence="5">Activator of the canonical Wnt signaling pathway by acting as a ligand for LGR4-6 receptors. Upon binding to LGR4-6 (LGR4, LGR5 or LGR6), LGR4-6 associate with phosphorylated LRP6 and frizzled receptors that are activated by extracellular Wnt receptors, triggering the canonical Wnt signaling pathway to increase expression of target genes. Also regulates the canonical Wnt/beta-catenin-dependent pathway and non-canonical Wnt signaling by acting as an inhibitor of ZNRF3, an important regulator of the Wnt signaling pathway.</text>
</comment>
<comment type="subunit">
    <text evidence="1 5">Binds heparin (By similarity). Interacts with LGR4, LGR5 and LGR6.</text>
</comment>
<comment type="subcellular location">
    <subcellularLocation>
        <location evidence="1">Secreted</location>
    </subcellularLocation>
</comment>
<comment type="alternative products">
    <event type="alternative splicing"/>
    <isoform>
        <id>Q8BJ73-1</id>
        <name>1</name>
        <sequence type="displayed"/>
    </isoform>
    <isoform>
        <id>Q8BJ73-2</id>
        <name>2</name>
        <sequence type="described" ref="VSP_018326 VSP_018327"/>
    </isoform>
</comment>
<comment type="domain">
    <text evidence="1">The FU repeat is required for activation and stabilization of beta-catenin.</text>
</comment>
<comment type="similarity">
    <text evidence="7">Belongs to the R-spondin family.</text>
</comment>
<comment type="sequence caution" evidence="7">
    <conflict type="frameshift">
        <sequence resource="EMBL-CDS" id="BAC25643"/>
    </conflict>
</comment>
<name>RSPO4_MOUSE</name>
<proteinExistence type="evidence at protein level"/>
<feature type="signal peptide" evidence="2">
    <location>
        <begin position="1"/>
        <end position="19"/>
    </location>
</feature>
<feature type="chain" id="PRO_0000234447" description="R-spondin-4">
    <location>
        <begin position="20"/>
        <end position="228"/>
    </location>
</feature>
<feature type="repeat" description="FU">
    <location>
        <begin position="85"/>
        <end position="128"/>
    </location>
</feature>
<feature type="domain" description="TSP type-1" evidence="3">
    <location>
        <begin position="138"/>
        <end position="197"/>
    </location>
</feature>
<feature type="region of interest" description="Disordered" evidence="4">
    <location>
        <begin position="193"/>
        <end position="228"/>
    </location>
</feature>
<feature type="compositionally biased region" description="Basic residues" evidence="4">
    <location>
        <begin position="203"/>
        <end position="228"/>
    </location>
</feature>
<feature type="glycosylation site" description="N-linked (GlcNAc...) asparagine" evidence="2">
    <location>
        <position position="34"/>
    </location>
</feature>
<feature type="disulfide bond" evidence="3">
    <location>
        <begin position="35"/>
        <end position="41"/>
    </location>
</feature>
<feature type="disulfide bond" evidence="3">
    <location>
        <begin position="38"/>
        <end position="47"/>
    </location>
</feature>
<feature type="disulfide bond" evidence="3">
    <location>
        <begin position="50"/>
        <end position="69"/>
    </location>
</feature>
<feature type="disulfide bond" evidence="3">
    <location>
        <begin position="73"/>
        <end position="88"/>
    </location>
</feature>
<feature type="disulfide bond" evidence="3">
    <location>
        <begin position="91"/>
        <end position="98"/>
    </location>
</feature>
<feature type="disulfide bond" evidence="3">
    <location>
        <begin position="95"/>
        <end position="104"/>
    </location>
</feature>
<feature type="disulfide bond" evidence="3">
    <location>
        <begin position="107"/>
        <end position="118"/>
    </location>
</feature>
<feature type="disulfide bond" evidence="3">
    <location>
        <begin position="122"/>
        <end position="135"/>
    </location>
</feature>
<feature type="disulfide bond" evidence="3">
    <location>
        <begin position="139"/>
        <end position="181"/>
    </location>
</feature>
<feature type="disulfide bond" evidence="3">
    <location>
        <begin position="150"/>
        <end position="157"/>
    </location>
</feature>
<feature type="disulfide bond" evidence="3">
    <location>
        <begin position="190"/>
        <end position="196"/>
    </location>
</feature>
<feature type="splice variant" id="VSP_018326" description="In isoform 2." evidence="6">
    <original>S</original>
    <variation>R</variation>
    <location>
        <position position="146"/>
    </location>
</feature>
<feature type="splice variant" id="VSP_018327" description="In isoform 2." evidence="6">
    <location>
        <begin position="147"/>
        <end position="228"/>
    </location>
</feature>
<protein>
    <recommendedName>
        <fullName>R-spondin-4</fullName>
    </recommendedName>
    <alternativeName>
        <fullName>Cysteine-rich and single thrombospondin domain-containing protein 4</fullName>
        <shortName>Cristin-4</shortName>
        <shortName>mCristin-4</shortName>
    </alternativeName>
    <alternativeName>
        <fullName>Roof plate-specific spondin-4</fullName>
    </alternativeName>
</protein>
<dbReference type="EMBL" id="AK020904">
    <property type="protein sequence ID" value="BAC25643.1"/>
    <property type="status" value="ALT_FRAME"/>
    <property type="molecule type" value="mRNA"/>
</dbReference>
<dbReference type="EMBL" id="BC048707">
    <property type="status" value="NOT_ANNOTATED_CDS"/>
    <property type="molecule type" value="mRNA"/>
</dbReference>
<dbReference type="CCDS" id="CCDS38272.1">
    <molecule id="Q8BJ73-1"/>
</dbReference>
<dbReference type="RefSeq" id="NP_001035779.1">
    <molecule id="Q8BJ73-1"/>
    <property type="nucleotide sequence ID" value="NM_001040689.1"/>
</dbReference>
<dbReference type="SMR" id="Q8BJ73"/>
<dbReference type="FunCoup" id="Q8BJ73">
    <property type="interactions" value="161"/>
</dbReference>
<dbReference type="STRING" id="10090.ENSMUSP00000041578"/>
<dbReference type="GlyCosmos" id="Q8BJ73">
    <property type="glycosylation" value="1 site, No reported glycans"/>
</dbReference>
<dbReference type="GlyGen" id="Q8BJ73">
    <property type="glycosylation" value="1 site"/>
</dbReference>
<dbReference type="PhosphoSitePlus" id="Q8BJ73"/>
<dbReference type="PaxDb" id="10090-ENSMUSP00000041578"/>
<dbReference type="Antibodypedia" id="54131">
    <property type="antibodies" value="73 antibodies from 19 providers"/>
</dbReference>
<dbReference type="DNASU" id="228770"/>
<dbReference type="Ensembl" id="ENSMUST00000042217.4">
    <molecule id="Q8BJ73-1"/>
    <property type="protein sequence ID" value="ENSMUSP00000041578.4"/>
    <property type="gene ID" value="ENSMUSG00000032852.4"/>
</dbReference>
<dbReference type="GeneID" id="228770"/>
<dbReference type="KEGG" id="mmu:228770"/>
<dbReference type="UCSC" id="uc008nep.1">
    <molecule id="Q8BJ73-1"/>
    <property type="organism name" value="mouse"/>
</dbReference>
<dbReference type="AGR" id="MGI:1924467"/>
<dbReference type="CTD" id="343637"/>
<dbReference type="MGI" id="MGI:1924467">
    <property type="gene designation" value="Rspo4"/>
</dbReference>
<dbReference type="VEuPathDB" id="HostDB:ENSMUSG00000032852"/>
<dbReference type="eggNOG" id="KOG3525">
    <property type="taxonomic scope" value="Eukaryota"/>
</dbReference>
<dbReference type="GeneTree" id="ENSGT00940000160937"/>
<dbReference type="HOGENOM" id="CLU_064219_1_1_1"/>
<dbReference type="InParanoid" id="Q8BJ73"/>
<dbReference type="OMA" id="CQERFYL"/>
<dbReference type="OrthoDB" id="10257656at2759"/>
<dbReference type="PhylomeDB" id="Q8BJ73"/>
<dbReference type="TreeFam" id="TF331799"/>
<dbReference type="Reactome" id="R-MMU-4641263">
    <property type="pathway name" value="Regulation of FZD by ubiquitination"/>
</dbReference>
<dbReference type="BioGRID-ORCS" id="228770">
    <property type="hits" value="2 hits in 76 CRISPR screens"/>
</dbReference>
<dbReference type="ChiTaRS" id="Rspo4">
    <property type="organism name" value="mouse"/>
</dbReference>
<dbReference type="PRO" id="PR:Q8BJ73"/>
<dbReference type="Proteomes" id="UP000000589">
    <property type="component" value="Chromosome 2"/>
</dbReference>
<dbReference type="RNAct" id="Q8BJ73">
    <property type="molecule type" value="protein"/>
</dbReference>
<dbReference type="Bgee" id="ENSMUSG00000032852">
    <property type="expression patterns" value="Expressed in urethra mesenchymal layer and 64 other cell types or tissues"/>
</dbReference>
<dbReference type="ExpressionAtlas" id="Q8BJ73">
    <property type="expression patterns" value="baseline and differential"/>
</dbReference>
<dbReference type="GO" id="GO:0005576">
    <property type="term" value="C:extracellular region"/>
    <property type="evidence" value="ECO:0007669"/>
    <property type="project" value="UniProtKB-SubCell"/>
</dbReference>
<dbReference type="GO" id="GO:0008201">
    <property type="term" value="F:heparin binding"/>
    <property type="evidence" value="ECO:0007669"/>
    <property type="project" value="UniProtKB-KW"/>
</dbReference>
<dbReference type="GO" id="GO:0035878">
    <property type="term" value="P:nail development"/>
    <property type="evidence" value="ECO:0000266"/>
    <property type="project" value="MGI"/>
</dbReference>
<dbReference type="GO" id="GO:0030177">
    <property type="term" value="P:positive regulation of Wnt signaling pathway"/>
    <property type="evidence" value="ECO:0007669"/>
    <property type="project" value="Ensembl"/>
</dbReference>
<dbReference type="GO" id="GO:0016055">
    <property type="term" value="P:Wnt signaling pathway"/>
    <property type="evidence" value="ECO:0007669"/>
    <property type="project" value="UniProtKB-KW"/>
</dbReference>
<dbReference type="CDD" id="cd00064">
    <property type="entry name" value="FU"/>
    <property type="match status" value="1"/>
</dbReference>
<dbReference type="FunFam" id="2.10.220.10:FF:000012">
    <property type="entry name" value="R-spondin 4"/>
    <property type="match status" value="1"/>
</dbReference>
<dbReference type="Gene3D" id="2.10.220.10">
    <property type="entry name" value="Hormone Receptor, Insulin-like Growth Factor Receptor 1, Chain A, domain 2"/>
    <property type="match status" value="1"/>
</dbReference>
<dbReference type="InterPro" id="IPR006212">
    <property type="entry name" value="Furin_repeat"/>
</dbReference>
<dbReference type="InterPro" id="IPR009030">
    <property type="entry name" value="Growth_fac_rcpt_cys_sf"/>
</dbReference>
<dbReference type="InterPro" id="IPR051514">
    <property type="entry name" value="R-spondin"/>
</dbReference>
<dbReference type="InterPro" id="IPR043601">
    <property type="entry name" value="Rspo_Fu-CRD_dom"/>
</dbReference>
<dbReference type="InterPro" id="IPR000884">
    <property type="entry name" value="TSP1_rpt"/>
</dbReference>
<dbReference type="PANTHER" id="PTHR46987">
    <property type="entry name" value="NEUROHYPOPHYSIAL HORMONES, N-TERMINAL DOMAIN CONTAINING PROTEIN"/>
    <property type="match status" value="1"/>
</dbReference>
<dbReference type="PANTHER" id="PTHR46987:SF6">
    <property type="entry name" value="R-SPONDIN-4"/>
    <property type="match status" value="1"/>
</dbReference>
<dbReference type="Pfam" id="PF15913">
    <property type="entry name" value="Furin-like_2"/>
    <property type="match status" value="1"/>
</dbReference>
<dbReference type="SMART" id="SM00261">
    <property type="entry name" value="FU"/>
    <property type="match status" value="2"/>
</dbReference>
<dbReference type="SMART" id="SM00209">
    <property type="entry name" value="TSP1"/>
    <property type="match status" value="1"/>
</dbReference>
<dbReference type="SUPFAM" id="SSF57184">
    <property type="entry name" value="Growth factor receptor domain"/>
    <property type="match status" value="1"/>
</dbReference>
<dbReference type="PROSITE" id="PS50092">
    <property type="entry name" value="TSP1"/>
    <property type="match status" value="1"/>
</dbReference>
<evidence type="ECO:0000250" key="1"/>
<evidence type="ECO:0000255" key="2"/>
<evidence type="ECO:0000255" key="3">
    <source>
        <dbReference type="PROSITE-ProRule" id="PRU00210"/>
    </source>
</evidence>
<evidence type="ECO:0000256" key="4">
    <source>
        <dbReference type="SAM" id="MobiDB-lite"/>
    </source>
</evidence>
<evidence type="ECO:0000269" key="5">
    <source>
    </source>
</evidence>
<evidence type="ECO:0000303" key="6">
    <source>
    </source>
</evidence>
<evidence type="ECO:0000305" key="7"/>
<sequence length="228" mass="25866">MRAPLCLLLLLAHAVDMLALYRRKKQAGTGLGGNCTGCVICSEENGCSTCQQRLFLFIRREGIRQYGKCVHDCPLGFFGIRGQEANRCKKCGATCESCFSQDFCIRCKRRFHLYKGKCLPSCPPGTLTHQSTRECQEECEPSPWGSWSPCIHNGKTCGSGWGLETRVREAGPAKQEETASCRVLSESRKCPIKRLCPGERNPRQKNRKDRRQRKDRKLERRPHQRGSQ</sequence>
<organism>
    <name type="scientific">Mus musculus</name>
    <name type="common">Mouse</name>
    <dbReference type="NCBI Taxonomy" id="10090"/>
    <lineage>
        <taxon>Eukaryota</taxon>
        <taxon>Metazoa</taxon>
        <taxon>Chordata</taxon>
        <taxon>Craniata</taxon>
        <taxon>Vertebrata</taxon>
        <taxon>Euteleostomi</taxon>
        <taxon>Mammalia</taxon>
        <taxon>Eutheria</taxon>
        <taxon>Euarchontoglires</taxon>
        <taxon>Glires</taxon>
        <taxon>Rodentia</taxon>
        <taxon>Myomorpha</taxon>
        <taxon>Muroidea</taxon>
        <taxon>Muridae</taxon>
        <taxon>Murinae</taxon>
        <taxon>Mus</taxon>
        <taxon>Mus</taxon>
    </lineage>
</organism>
<reference key="1">
    <citation type="journal article" date="2005" name="Science">
        <title>The transcriptional landscape of the mammalian genome.</title>
        <authorList>
            <person name="Carninci P."/>
            <person name="Kasukawa T."/>
            <person name="Katayama S."/>
            <person name="Gough J."/>
            <person name="Frith M.C."/>
            <person name="Maeda N."/>
            <person name="Oyama R."/>
            <person name="Ravasi T."/>
            <person name="Lenhard B."/>
            <person name="Wells C."/>
            <person name="Kodzius R."/>
            <person name="Shimokawa K."/>
            <person name="Bajic V.B."/>
            <person name="Brenner S.E."/>
            <person name="Batalov S."/>
            <person name="Forrest A.R."/>
            <person name="Zavolan M."/>
            <person name="Davis M.J."/>
            <person name="Wilming L.G."/>
            <person name="Aidinis V."/>
            <person name="Allen J.E."/>
            <person name="Ambesi-Impiombato A."/>
            <person name="Apweiler R."/>
            <person name="Aturaliya R.N."/>
            <person name="Bailey T.L."/>
            <person name="Bansal M."/>
            <person name="Baxter L."/>
            <person name="Beisel K.W."/>
            <person name="Bersano T."/>
            <person name="Bono H."/>
            <person name="Chalk A.M."/>
            <person name="Chiu K.P."/>
            <person name="Choudhary V."/>
            <person name="Christoffels A."/>
            <person name="Clutterbuck D.R."/>
            <person name="Crowe M.L."/>
            <person name="Dalla E."/>
            <person name="Dalrymple B.P."/>
            <person name="de Bono B."/>
            <person name="Della Gatta G."/>
            <person name="di Bernardo D."/>
            <person name="Down T."/>
            <person name="Engstrom P."/>
            <person name="Fagiolini M."/>
            <person name="Faulkner G."/>
            <person name="Fletcher C.F."/>
            <person name="Fukushima T."/>
            <person name="Furuno M."/>
            <person name="Futaki S."/>
            <person name="Gariboldi M."/>
            <person name="Georgii-Hemming P."/>
            <person name="Gingeras T.R."/>
            <person name="Gojobori T."/>
            <person name="Green R.E."/>
            <person name="Gustincich S."/>
            <person name="Harbers M."/>
            <person name="Hayashi Y."/>
            <person name="Hensch T.K."/>
            <person name="Hirokawa N."/>
            <person name="Hill D."/>
            <person name="Huminiecki L."/>
            <person name="Iacono M."/>
            <person name="Ikeo K."/>
            <person name="Iwama A."/>
            <person name="Ishikawa T."/>
            <person name="Jakt M."/>
            <person name="Kanapin A."/>
            <person name="Katoh M."/>
            <person name="Kawasawa Y."/>
            <person name="Kelso J."/>
            <person name="Kitamura H."/>
            <person name="Kitano H."/>
            <person name="Kollias G."/>
            <person name="Krishnan S.P."/>
            <person name="Kruger A."/>
            <person name="Kummerfeld S.K."/>
            <person name="Kurochkin I.V."/>
            <person name="Lareau L.F."/>
            <person name="Lazarevic D."/>
            <person name="Lipovich L."/>
            <person name="Liu J."/>
            <person name="Liuni S."/>
            <person name="McWilliam S."/>
            <person name="Madan Babu M."/>
            <person name="Madera M."/>
            <person name="Marchionni L."/>
            <person name="Matsuda H."/>
            <person name="Matsuzawa S."/>
            <person name="Miki H."/>
            <person name="Mignone F."/>
            <person name="Miyake S."/>
            <person name="Morris K."/>
            <person name="Mottagui-Tabar S."/>
            <person name="Mulder N."/>
            <person name="Nakano N."/>
            <person name="Nakauchi H."/>
            <person name="Ng P."/>
            <person name="Nilsson R."/>
            <person name="Nishiguchi S."/>
            <person name="Nishikawa S."/>
            <person name="Nori F."/>
            <person name="Ohara O."/>
            <person name="Okazaki Y."/>
            <person name="Orlando V."/>
            <person name="Pang K.C."/>
            <person name="Pavan W.J."/>
            <person name="Pavesi G."/>
            <person name="Pesole G."/>
            <person name="Petrovsky N."/>
            <person name="Piazza S."/>
            <person name="Reed J."/>
            <person name="Reid J.F."/>
            <person name="Ring B.Z."/>
            <person name="Ringwald M."/>
            <person name="Rost B."/>
            <person name="Ruan Y."/>
            <person name="Salzberg S.L."/>
            <person name="Sandelin A."/>
            <person name="Schneider C."/>
            <person name="Schoenbach C."/>
            <person name="Sekiguchi K."/>
            <person name="Semple C.A."/>
            <person name="Seno S."/>
            <person name="Sessa L."/>
            <person name="Sheng Y."/>
            <person name="Shibata Y."/>
            <person name="Shimada H."/>
            <person name="Shimada K."/>
            <person name="Silva D."/>
            <person name="Sinclair B."/>
            <person name="Sperling S."/>
            <person name="Stupka E."/>
            <person name="Sugiura K."/>
            <person name="Sultana R."/>
            <person name="Takenaka Y."/>
            <person name="Taki K."/>
            <person name="Tammoja K."/>
            <person name="Tan S.L."/>
            <person name="Tang S."/>
            <person name="Taylor M.S."/>
            <person name="Tegner J."/>
            <person name="Teichmann S.A."/>
            <person name="Ueda H.R."/>
            <person name="van Nimwegen E."/>
            <person name="Verardo R."/>
            <person name="Wei C.L."/>
            <person name="Yagi K."/>
            <person name="Yamanishi H."/>
            <person name="Zabarovsky E."/>
            <person name="Zhu S."/>
            <person name="Zimmer A."/>
            <person name="Hide W."/>
            <person name="Bult C."/>
            <person name="Grimmond S.M."/>
            <person name="Teasdale R.D."/>
            <person name="Liu E.T."/>
            <person name="Brusic V."/>
            <person name="Quackenbush J."/>
            <person name="Wahlestedt C."/>
            <person name="Mattick J.S."/>
            <person name="Hume D.A."/>
            <person name="Kai C."/>
            <person name="Sasaki D."/>
            <person name="Tomaru Y."/>
            <person name="Fukuda S."/>
            <person name="Kanamori-Katayama M."/>
            <person name="Suzuki M."/>
            <person name="Aoki J."/>
            <person name="Arakawa T."/>
            <person name="Iida J."/>
            <person name="Imamura K."/>
            <person name="Itoh M."/>
            <person name="Kato T."/>
            <person name="Kawaji H."/>
            <person name="Kawagashira N."/>
            <person name="Kawashima T."/>
            <person name="Kojima M."/>
            <person name="Kondo S."/>
            <person name="Konno H."/>
            <person name="Nakano K."/>
            <person name="Ninomiya N."/>
            <person name="Nishio T."/>
            <person name="Okada M."/>
            <person name="Plessy C."/>
            <person name="Shibata K."/>
            <person name="Shiraki T."/>
            <person name="Suzuki S."/>
            <person name="Tagami M."/>
            <person name="Waki K."/>
            <person name="Watahiki A."/>
            <person name="Okamura-Oho Y."/>
            <person name="Suzuki H."/>
            <person name="Kawai J."/>
            <person name="Hayashizaki Y."/>
        </authorList>
    </citation>
    <scope>NUCLEOTIDE SEQUENCE [LARGE SCALE MRNA] (ISOFORM 2)</scope>
    <source>
        <strain>C57BL/6J</strain>
        <tissue>Retina</tissue>
    </source>
</reference>
<reference key="2">
    <citation type="journal article" date="2004" name="Genome Res.">
        <title>The status, quality, and expansion of the NIH full-length cDNA project: the Mammalian Gene Collection (MGC).</title>
        <authorList>
            <consortium name="The MGC Project Team"/>
        </authorList>
    </citation>
    <scope>NUCLEOTIDE SEQUENCE [LARGE SCALE MRNA] (ISOFORM 1)</scope>
    <source>
        <tissue>Limb</tissue>
    </source>
</reference>
<reference key="3">
    <citation type="journal article" date="2011" name="Proc. Natl. Acad. Sci. U.S.A.">
        <title>R-spondins function as ligands of the orphan receptors LGR4 and LGR5 to regulate Wnt/beta-catenin signaling.</title>
        <authorList>
            <person name="Carmon K.S."/>
            <person name="Gong X."/>
            <person name="Lin Q."/>
            <person name="Thomas A."/>
            <person name="Liu Q."/>
        </authorList>
    </citation>
    <scope>FUNCTION</scope>
    <scope>INTERACTION WITH LGR4 AND LGR5</scope>
</reference>
<accession>Q8BJ73</accession>
<gene>
    <name type="primary">Rspo4</name>
</gene>